<name>GNDS_HUMAN</name>
<proteinExistence type="evidence at protein level"/>
<sequence length="914" mass="100607">MVQRMWAEAAGPAGGAEPLFPGSRRSRSVWDAVRLEVGVPDSCPVVLHSFTQLDPDLPRPESSTQEIGEELINGVIYSISLRKVQLHHGGNKGQRWLGYENESALNLYETCKVRTVKAGTLEKLVEHLVPAFQGSDLSYVTIFLCTYRAFTTTQQVLDLLFKRYGRCDALTASSRYGCILPYSDEDGGPQDQLKNAISSILGTWLDQYSEDFCQPPDFPCLKQLVAYVQLNMPGSDLERRAHLLLAQLEHSEPIEAEPEALSPVPALKPTPELELALTPARAPSPVPAPAPEPEPAPTPAPGSELEVAPAPAPELQQAPEPAVGLESAPAPALELEPAPEQDPAPSQTLELEPAPAPVPSLQPSWPSPVVAENGLSEEKPHLLVFPPDLVAEQFTLMDAELFKKVVPYHCLGSIWSQRDKKGKEHLAPTIRATVTQFNSVANCVITTCLGNRSTKAPDRARVVEHWIEVARECRILKNFSSLYAILSALQSNSIHRLKKTWEDVSRDSFRIFQKLSEIFSDENNYSLSRELLIKEGTSKFATLEMNPKRAQKRPKETGIIQGTVPYLGTFLTDLVMLDTAMKDYLYGRLINFEKRRKEFEVIAQIKLLQSACNNYSIAPDEQFGAWFRAVERLSETESYNLSCELEPPSESASNTLRTKKNTAIVKRWSDRQAPSTELSTSGSSHSKSCDQLRCGPYLSSGDIADALSVHSAGSSSSDVEEINISFVPESPDGQEKKFWESASQSSPETSGISSASSSTSSSSASTTPVAATRTHKRSVSGLCNSSSALPLYNQQVGDCCIIRVSLDVDNGNMYKSILVTSQDKAPAVIRKAMDKHNLEEEEPEDYELLQILSDDRKLKIPENANVFYAMNSTANYDFVLKKRTFTKGVKVKHGASSTLPRMKQKGLKIAKGIF</sequence>
<organism>
    <name type="scientific">Homo sapiens</name>
    <name type="common">Human</name>
    <dbReference type="NCBI Taxonomy" id="9606"/>
    <lineage>
        <taxon>Eukaryota</taxon>
        <taxon>Metazoa</taxon>
        <taxon>Chordata</taxon>
        <taxon>Craniata</taxon>
        <taxon>Vertebrata</taxon>
        <taxon>Euteleostomi</taxon>
        <taxon>Mammalia</taxon>
        <taxon>Eutheria</taxon>
        <taxon>Euarchontoglires</taxon>
        <taxon>Primates</taxon>
        <taxon>Haplorrhini</taxon>
        <taxon>Catarrhini</taxon>
        <taxon>Hominidae</taxon>
        <taxon>Homo</taxon>
    </lineage>
</organism>
<reference key="1">
    <citation type="journal article" date="1997" name="Ann. Hum. Genet.">
        <title>Cloning and evaluation of RALGDS as a candidate for the tuberous sclerosis gene TSC1.</title>
        <authorList>
            <person name="Humphrey D."/>
            <person name="Kwiatkowska J."/>
            <person name="Henske E.P."/>
            <person name="Haines J.L."/>
            <person name="Halley D."/>
            <person name="van Slegtenhorst M."/>
            <person name="Kwiatkowski D.J."/>
        </authorList>
    </citation>
    <scope>NUCLEOTIDE SEQUENCE [GENOMIC DNA / MRNA] (ISOFORM 1)</scope>
    <source>
        <tissue>Brain</tissue>
    </source>
</reference>
<reference key="2">
    <citation type="submission" date="1997-09" db="EMBL/GenBank/DDBJ databases">
        <authorList>
            <person name="Yu L."/>
            <person name="Zhao S.Y."/>
        </authorList>
    </citation>
    <scope>NUCLEOTIDE SEQUENCE [MRNA] (ISOFORM 3)</scope>
</reference>
<reference key="3">
    <citation type="journal article" date="2004" name="Nat. Genet.">
        <title>Complete sequencing and characterization of 21,243 full-length human cDNAs.</title>
        <authorList>
            <person name="Ota T."/>
            <person name="Suzuki Y."/>
            <person name="Nishikawa T."/>
            <person name="Otsuki T."/>
            <person name="Sugiyama T."/>
            <person name="Irie R."/>
            <person name="Wakamatsu A."/>
            <person name="Hayashi K."/>
            <person name="Sato H."/>
            <person name="Nagai K."/>
            <person name="Kimura K."/>
            <person name="Makita H."/>
            <person name="Sekine M."/>
            <person name="Obayashi M."/>
            <person name="Nishi T."/>
            <person name="Shibahara T."/>
            <person name="Tanaka T."/>
            <person name="Ishii S."/>
            <person name="Yamamoto J."/>
            <person name="Saito K."/>
            <person name="Kawai Y."/>
            <person name="Isono Y."/>
            <person name="Nakamura Y."/>
            <person name="Nagahari K."/>
            <person name="Murakami K."/>
            <person name="Yasuda T."/>
            <person name="Iwayanagi T."/>
            <person name="Wagatsuma M."/>
            <person name="Shiratori A."/>
            <person name="Sudo H."/>
            <person name="Hosoiri T."/>
            <person name="Kaku Y."/>
            <person name="Kodaira H."/>
            <person name="Kondo H."/>
            <person name="Sugawara M."/>
            <person name="Takahashi M."/>
            <person name="Kanda K."/>
            <person name="Yokoi T."/>
            <person name="Furuya T."/>
            <person name="Kikkawa E."/>
            <person name="Omura Y."/>
            <person name="Abe K."/>
            <person name="Kamihara K."/>
            <person name="Katsuta N."/>
            <person name="Sato K."/>
            <person name="Tanikawa M."/>
            <person name="Yamazaki M."/>
            <person name="Ninomiya K."/>
            <person name="Ishibashi T."/>
            <person name="Yamashita H."/>
            <person name="Murakawa K."/>
            <person name="Fujimori K."/>
            <person name="Tanai H."/>
            <person name="Kimata M."/>
            <person name="Watanabe M."/>
            <person name="Hiraoka S."/>
            <person name="Chiba Y."/>
            <person name="Ishida S."/>
            <person name="Ono Y."/>
            <person name="Takiguchi S."/>
            <person name="Watanabe S."/>
            <person name="Yosida M."/>
            <person name="Hotuta T."/>
            <person name="Kusano J."/>
            <person name="Kanehori K."/>
            <person name="Takahashi-Fujii A."/>
            <person name="Hara H."/>
            <person name="Tanase T.-O."/>
            <person name="Nomura Y."/>
            <person name="Togiya S."/>
            <person name="Komai F."/>
            <person name="Hara R."/>
            <person name="Takeuchi K."/>
            <person name="Arita M."/>
            <person name="Imose N."/>
            <person name="Musashino K."/>
            <person name="Yuuki H."/>
            <person name="Oshima A."/>
            <person name="Sasaki N."/>
            <person name="Aotsuka S."/>
            <person name="Yoshikawa Y."/>
            <person name="Matsunawa H."/>
            <person name="Ichihara T."/>
            <person name="Shiohata N."/>
            <person name="Sano S."/>
            <person name="Moriya S."/>
            <person name="Momiyama H."/>
            <person name="Satoh N."/>
            <person name="Takami S."/>
            <person name="Terashima Y."/>
            <person name="Suzuki O."/>
            <person name="Nakagawa S."/>
            <person name="Senoh A."/>
            <person name="Mizoguchi H."/>
            <person name="Goto Y."/>
            <person name="Shimizu F."/>
            <person name="Wakebe H."/>
            <person name="Hishigaki H."/>
            <person name="Watanabe T."/>
            <person name="Sugiyama A."/>
            <person name="Takemoto M."/>
            <person name="Kawakami B."/>
            <person name="Yamazaki M."/>
            <person name="Watanabe K."/>
            <person name="Kumagai A."/>
            <person name="Itakura S."/>
            <person name="Fukuzumi Y."/>
            <person name="Fujimori Y."/>
            <person name="Komiyama M."/>
            <person name="Tashiro H."/>
            <person name="Tanigami A."/>
            <person name="Fujiwara T."/>
            <person name="Ono T."/>
            <person name="Yamada K."/>
            <person name="Fujii Y."/>
            <person name="Ozaki K."/>
            <person name="Hirao M."/>
            <person name="Ohmori Y."/>
            <person name="Kawabata A."/>
            <person name="Hikiji T."/>
            <person name="Kobatake N."/>
            <person name="Inagaki H."/>
            <person name="Ikema Y."/>
            <person name="Okamoto S."/>
            <person name="Okitani R."/>
            <person name="Kawakami T."/>
            <person name="Noguchi S."/>
            <person name="Itoh T."/>
            <person name="Shigeta K."/>
            <person name="Senba T."/>
            <person name="Matsumura K."/>
            <person name="Nakajima Y."/>
            <person name="Mizuno T."/>
            <person name="Morinaga M."/>
            <person name="Sasaki M."/>
            <person name="Togashi T."/>
            <person name="Oyama M."/>
            <person name="Hata H."/>
            <person name="Watanabe M."/>
            <person name="Komatsu T."/>
            <person name="Mizushima-Sugano J."/>
            <person name="Satoh T."/>
            <person name="Shirai Y."/>
            <person name="Takahashi Y."/>
            <person name="Nakagawa K."/>
            <person name="Okumura K."/>
            <person name="Nagase T."/>
            <person name="Nomura N."/>
            <person name="Kikuchi H."/>
            <person name="Masuho Y."/>
            <person name="Yamashita R."/>
            <person name="Nakai K."/>
            <person name="Yada T."/>
            <person name="Nakamura Y."/>
            <person name="Ohara O."/>
            <person name="Isogai T."/>
            <person name="Sugano S."/>
        </authorList>
    </citation>
    <scope>NUCLEOTIDE SEQUENCE [LARGE SCALE MRNA] (ISOFORMS 4 AND 5)</scope>
</reference>
<reference key="4">
    <citation type="journal article" date="2004" name="Nature">
        <title>DNA sequence and analysis of human chromosome 9.</title>
        <authorList>
            <person name="Humphray S.J."/>
            <person name="Oliver K."/>
            <person name="Hunt A.R."/>
            <person name="Plumb R.W."/>
            <person name="Loveland J.E."/>
            <person name="Howe K.L."/>
            <person name="Andrews T.D."/>
            <person name="Searle S."/>
            <person name="Hunt S.E."/>
            <person name="Scott C.E."/>
            <person name="Jones M.C."/>
            <person name="Ainscough R."/>
            <person name="Almeida J.P."/>
            <person name="Ambrose K.D."/>
            <person name="Ashwell R.I.S."/>
            <person name="Babbage A.K."/>
            <person name="Babbage S."/>
            <person name="Bagguley C.L."/>
            <person name="Bailey J."/>
            <person name="Banerjee R."/>
            <person name="Barker D.J."/>
            <person name="Barlow K.F."/>
            <person name="Bates K."/>
            <person name="Beasley H."/>
            <person name="Beasley O."/>
            <person name="Bird C.P."/>
            <person name="Bray-Allen S."/>
            <person name="Brown A.J."/>
            <person name="Brown J.Y."/>
            <person name="Burford D."/>
            <person name="Burrill W."/>
            <person name="Burton J."/>
            <person name="Carder C."/>
            <person name="Carter N.P."/>
            <person name="Chapman J.C."/>
            <person name="Chen Y."/>
            <person name="Clarke G."/>
            <person name="Clark S.Y."/>
            <person name="Clee C.M."/>
            <person name="Clegg S."/>
            <person name="Collier R.E."/>
            <person name="Corby N."/>
            <person name="Crosier M."/>
            <person name="Cummings A.T."/>
            <person name="Davies J."/>
            <person name="Dhami P."/>
            <person name="Dunn M."/>
            <person name="Dutta I."/>
            <person name="Dyer L.W."/>
            <person name="Earthrowl M.E."/>
            <person name="Faulkner L."/>
            <person name="Fleming C.J."/>
            <person name="Frankish A."/>
            <person name="Frankland J.A."/>
            <person name="French L."/>
            <person name="Fricker D.G."/>
            <person name="Garner P."/>
            <person name="Garnett J."/>
            <person name="Ghori J."/>
            <person name="Gilbert J.G.R."/>
            <person name="Glison C."/>
            <person name="Grafham D.V."/>
            <person name="Gribble S."/>
            <person name="Griffiths C."/>
            <person name="Griffiths-Jones S."/>
            <person name="Grocock R."/>
            <person name="Guy J."/>
            <person name="Hall R.E."/>
            <person name="Hammond S."/>
            <person name="Harley J.L."/>
            <person name="Harrison E.S.I."/>
            <person name="Hart E.A."/>
            <person name="Heath P.D."/>
            <person name="Henderson C.D."/>
            <person name="Hopkins B.L."/>
            <person name="Howard P.J."/>
            <person name="Howden P.J."/>
            <person name="Huckle E."/>
            <person name="Johnson C."/>
            <person name="Johnson D."/>
            <person name="Joy A.A."/>
            <person name="Kay M."/>
            <person name="Keenan S."/>
            <person name="Kershaw J.K."/>
            <person name="Kimberley A.M."/>
            <person name="King A."/>
            <person name="Knights A."/>
            <person name="Laird G.K."/>
            <person name="Langford C."/>
            <person name="Lawlor S."/>
            <person name="Leongamornlert D.A."/>
            <person name="Leversha M."/>
            <person name="Lloyd C."/>
            <person name="Lloyd D.M."/>
            <person name="Lovell J."/>
            <person name="Martin S."/>
            <person name="Mashreghi-Mohammadi M."/>
            <person name="Matthews L."/>
            <person name="McLaren S."/>
            <person name="McLay K.E."/>
            <person name="McMurray A."/>
            <person name="Milne S."/>
            <person name="Nickerson T."/>
            <person name="Nisbett J."/>
            <person name="Nordsiek G."/>
            <person name="Pearce A.V."/>
            <person name="Peck A.I."/>
            <person name="Porter K.M."/>
            <person name="Pandian R."/>
            <person name="Pelan S."/>
            <person name="Phillimore B."/>
            <person name="Povey S."/>
            <person name="Ramsey Y."/>
            <person name="Rand V."/>
            <person name="Scharfe M."/>
            <person name="Sehra H.K."/>
            <person name="Shownkeen R."/>
            <person name="Sims S.K."/>
            <person name="Skuce C.D."/>
            <person name="Smith M."/>
            <person name="Steward C.A."/>
            <person name="Swarbreck D."/>
            <person name="Sycamore N."/>
            <person name="Tester J."/>
            <person name="Thorpe A."/>
            <person name="Tracey A."/>
            <person name="Tromans A."/>
            <person name="Thomas D.W."/>
            <person name="Wall M."/>
            <person name="Wallis J.M."/>
            <person name="West A.P."/>
            <person name="Whitehead S.L."/>
            <person name="Willey D.L."/>
            <person name="Williams S.A."/>
            <person name="Wilming L."/>
            <person name="Wray P.W."/>
            <person name="Young L."/>
            <person name="Ashurst J.L."/>
            <person name="Coulson A."/>
            <person name="Blocker H."/>
            <person name="Durbin R.M."/>
            <person name="Sulston J.E."/>
            <person name="Hubbard T."/>
            <person name="Jackson M.J."/>
            <person name="Bentley D.R."/>
            <person name="Beck S."/>
            <person name="Rogers J."/>
            <person name="Dunham I."/>
        </authorList>
    </citation>
    <scope>NUCLEOTIDE SEQUENCE [LARGE SCALE GENOMIC DNA]</scope>
</reference>
<reference key="5">
    <citation type="submission" date="2005-07" db="EMBL/GenBank/DDBJ databases">
        <authorList>
            <person name="Mural R.J."/>
            <person name="Istrail S."/>
            <person name="Sutton G.G."/>
            <person name="Florea L."/>
            <person name="Halpern A.L."/>
            <person name="Mobarry C.M."/>
            <person name="Lippert R."/>
            <person name="Walenz B."/>
            <person name="Shatkay H."/>
            <person name="Dew I."/>
            <person name="Miller J.R."/>
            <person name="Flanigan M.J."/>
            <person name="Edwards N.J."/>
            <person name="Bolanos R."/>
            <person name="Fasulo D."/>
            <person name="Halldorsson B.V."/>
            <person name="Hannenhalli S."/>
            <person name="Turner R."/>
            <person name="Yooseph S."/>
            <person name="Lu F."/>
            <person name="Nusskern D.R."/>
            <person name="Shue B.C."/>
            <person name="Zheng X.H."/>
            <person name="Zhong F."/>
            <person name="Delcher A.L."/>
            <person name="Huson D.H."/>
            <person name="Kravitz S.A."/>
            <person name="Mouchard L."/>
            <person name="Reinert K."/>
            <person name="Remington K.A."/>
            <person name="Clark A.G."/>
            <person name="Waterman M.S."/>
            <person name="Eichler E.E."/>
            <person name="Adams M.D."/>
            <person name="Hunkapiller M.W."/>
            <person name="Myers E.W."/>
            <person name="Venter J.C."/>
        </authorList>
    </citation>
    <scope>NUCLEOTIDE SEQUENCE [LARGE SCALE GENOMIC DNA]</scope>
</reference>
<reference key="6">
    <citation type="journal article" date="2004" name="Genome Res.">
        <title>The status, quality, and expansion of the NIH full-length cDNA project: the Mammalian Gene Collection (MGC).</title>
        <authorList>
            <consortium name="The MGC Project Team"/>
        </authorList>
    </citation>
    <scope>NUCLEOTIDE SEQUENCE [LARGE SCALE MRNA] (ISOFORM 6)</scope>
    <source>
        <tissue>Placenta</tissue>
    </source>
</reference>
<reference key="7">
    <citation type="journal article" date="2000" name="DNA Res.">
        <title>Prediction of the coding sequences of unidentified human genes. XVI. The complete sequences of 150 new cDNA clones from brain which code for large proteins in vitro.</title>
        <authorList>
            <person name="Nagase T."/>
            <person name="Kikuno R."/>
            <person name="Ishikawa K."/>
            <person name="Hirosawa M."/>
            <person name="Ohara O."/>
        </authorList>
    </citation>
    <scope>NUCLEOTIDE SEQUENCE [LARGE SCALE MRNA] OF 205-912 (ISOFORM 2)</scope>
    <source>
        <tissue>Brain</tissue>
    </source>
</reference>
<reference key="8">
    <citation type="journal article" date="1994" name="Proc. Natl. Acad. Sci. U.S.A.">
        <title>Activated Ras interacts with the Ral guanine nucleotide dissociation stimulator.</title>
        <authorList>
            <person name="Hofer F."/>
            <person name="Fields S."/>
            <person name="Schneider C."/>
            <person name="Martin G.S."/>
        </authorList>
    </citation>
    <scope>NUCLEOTIDE SEQUENCE [MRNA] OF 587-914 (ISOFORM 1)</scope>
</reference>
<reference key="9">
    <citation type="journal article" date="2016" name="Immunity">
        <title>Ubiquitination of Innate Immune Regulator TRAF3 Orchestrates Expulsion of Intracellular Bacteria by Exocyst Complex.</title>
        <authorList>
            <person name="Miao Y."/>
            <person name="Wu J."/>
            <person name="Abraham S.N."/>
        </authorList>
    </citation>
    <scope>FUNCTION</scope>
    <scope>INTERACTION WITH TRAF3</scope>
</reference>
<reference key="10">
    <citation type="journal article" date="1997" name="Nat. Struct. Biol.">
        <title>Structure of the Ras-binding domain of RalGEF and implications for Ras binding and signalling.</title>
        <authorList>
            <person name="Geyer M."/>
            <person name="Herrmann C."/>
            <person name="Wohlgemuth S."/>
            <person name="Wittinghofer A."/>
            <person name="Kalbitzer H.R."/>
        </authorList>
    </citation>
    <scope>STRUCTURE BY NMR OF 788-884</scope>
</reference>
<reference key="11">
    <citation type="submission" date="1999-03" db="PDB data bank">
        <title>High-resolution structure of the RA-domain of human RalGDS and a dynamics study of its binding loop to Ras.</title>
        <authorList>
            <person name="Mueller T.D."/>
            <person name="Handel L."/>
            <person name="Schmieder P."/>
            <person name="Oschkinat H."/>
        </authorList>
    </citation>
    <scope>STRUCTURE BY NMR OF 771-886</scope>
</reference>
<reference key="12">
    <citation type="journal article" date="2006" name="Science">
        <title>The consensus coding sequences of human breast and colorectal cancers.</title>
        <authorList>
            <person name="Sjoeblom T."/>
            <person name="Jones S."/>
            <person name="Wood L.D."/>
            <person name="Parsons D.W."/>
            <person name="Lin J."/>
            <person name="Barber T.D."/>
            <person name="Mandelker D."/>
            <person name="Leary R.J."/>
            <person name="Ptak J."/>
            <person name="Silliman N."/>
            <person name="Szabo S."/>
            <person name="Buckhaults P."/>
            <person name="Farrell C."/>
            <person name="Meeh P."/>
            <person name="Markowitz S.D."/>
            <person name="Willis J."/>
            <person name="Dawson D."/>
            <person name="Willson J.K.V."/>
            <person name="Gazdar A.F."/>
            <person name="Hartigan J."/>
            <person name="Wu L."/>
            <person name="Liu C."/>
            <person name="Parmigiani G."/>
            <person name="Park B.H."/>
            <person name="Bachman K.E."/>
            <person name="Papadopoulos N."/>
            <person name="Vogelstein B."/>
            <person name="Kinzler K.W."/>
            <person name="Velculescu V.E."/>
        </authorList>
    </citation>
    <scope>VARIANT [LARGE SCALE ANALYSIS] LEU-496</scope>
</reference>
<comment type="function">
    <text evidence="1 7">Functions as a guanine nucleotide exchange factor (GEF) activating either RalA or RalB GTPases and plays an important role in intracellular transport. Interacts and acts as an effector molecule for R-Ras, H-Ras, K-Ras, and Rap (By similarity). During bacterial clearance, recognizes 'Lys-33'-linked polyubiquitinated TRAF3 and subsequently mediates assembly of the exocyst complex (PubMed:27438768).</text>
</comment>
<comment type="subunit">
    <text evidence="1 7">Interacts with RIT1 and RIT2 (By similarity). Interacts with OOG1 (By similarity). Interacts with TRAF3 (PubMed:27438768). Interacts with HRAS (By similarity).</text>
</comment>
<comment type="interaction">
    <interactant intactId="EBI-365861">
        <id>Q12967</id>
    </interactant>
    <interactant intactId="EBI-350145">
        <id>P01112</id>
        <label>HRAS</label>
    </interactant>
    <organismsDiffer>false</organismsDiffer>
    <experiments>3</experiments>
</comment>
<comment type="interaction">
    <interactant intactId="EBI-365861">
        <id>Q12967</id>
    </interactant>
    <interactant intactId="EBI-358143">
        <id>P61224</id>
        <label>RAP1B</label>
    </interactant>
    <organismsDiffer>false</organismsDiffer>
    <experiments>2</experiments>
</comment>
<comment type="interaction">
    <interactant intactId="EBI-12005546">
        <id>Q12967-6</id>
    </interactant>
    <interactant intactId="EBI-3867333">
        <id>A8MQ03</id>
        <label>CYSRT1</label>
    </interactant>
    <organismsDiffer>false</organismsDiffer>
    <experiments>3</experiments>
</comment>
<comment type="interaction">
    <interactant intactId="EBI-12005546">
        <id>Q12967-6</id>
    </interactant>
    <interactant intactId="EBI-740785">
        <id>P49639</id>
        <label>HOXA1</label>
    </interactant>
    <organismsDiffer>false</organismsDiffer>
    <experiments>3</experiments>
</comment>
<comment type="interaction">
    <interactant intactId="EBI-12005546">
        <id>Q12967-6</id>
    </interactant>
    <interactant intactId="EBI-10171774">
        <id>P60410</id>
        <label>KRTAP10-8</label>
    </interactant>
    <organismsDiffer>false</organismsDiffer>
    <experiments>3</experiments>
</comment>
<comment type="interaction">
    <interactant intactId="EBI-12005546">
        <id>Q12967-6</id>
    </interactant>
    <interactant intactId="EBI-358143">
        <id>P61224</id>
        <label>RAP1B</label>
    </interactant>
    <organismsDiffer>false</organismsDiffer>
    <experiments>3</experiments>
</comment>
<comment type="subcellular location">
    <subcellularLocation>
        <location evidence="1">Cytoplasm</location>
    </subcellularLocation>
    <subcellularLocation>
        <location evidence="1">Nucleus</location>
    </subcellularLocation>
    <text evidence="1">Localizes mainly in the peripheral region of the cytoplasmic membrane in oocytes and in preimplantation embryos until the 8-cell stage. Between the late 1-cell and the early 2-cell stages, nuclear localization becomes stronger. After the 4-cell stage, not detected in the nucleus.</text>
</comment>
<comment type="alternative products">
    <event type="alternative splicing"/>
    <isoform>
        <id>Q12967-1</id>
        <name>1</name>
        <sequence type="displayed"/>
    </isoform>
    <isoform>
        <id>Q12967-2</id>
        <name>2</name>
        <sequence type="described" ref="VSP_035301"/>
    </isoform>
    <isoform>
        <id>Q12967-3</id>
        <name>3</name>
        <sequence type="described" ref="VSP_043659"/>
    </isoform>
    <isoform>
        <id>Q12967-4</id>
        <name>4</name>
        <sequence type="described" ref="VSP_055215 VSP_055217"/>
    </isoform>
    <isoform>
        <id>Q12967-5</id>
        <name>5</name>
        <sequence type="described" ref="VSP_055216"/>
    </isoform>
    <isoform>
        <id>Q12967-6</id>
        <name>6</name>
        <sequence type="described" ref="VSP_055217"/>
    </isoform>
</comment>
<comment type="domain">
    <text>The Ras-associating domain interacts with Ras.</text>
</comment>
<comment type="PTM">
    <text evidence="1">Phosphorylation of Tyr-814 by MET blocks HRAS binding.</text>
</comment>
<feature type="chain" id="PRO_0000068877" description="Ral guanine nucleotide dissociation stimulator">
    <location>
        <begin position="1"/>
        <end position="914"/>
    </location>
</feature>
<feature type="domain" description="N-terminal Ras-GEF" evidence="2">
    <location>
        <begin position="112"/>
        <end position="249"/>
    </location>
</feature>
<feature type="domain" description="Ras-GEF" evidence="4">
    <location>
        <begin position="386"/>
        <end position="648"/>
    </location>
</feature>
<feature type="domain" description="Ras-associating" evidence="3">
    <location>
        <begin position="798"/>
        <end position="885"/>
    </location>
</feature>
<feature type="region of interest" description="Disordered" evidence="5">
    <location>
        <begin position="280"/>
        <end position="365"/>
    </location>
</feature>
<feature type="region of interest" description="Disordered" evidence="5">
    <location>
        <begin position="666"/>
        <end position="689"/>
    </location>
</feature>
<feature type="region of interest" description="Disordered" evidence="5">
    <location>
        <begin position="728"/>
        <end position="776"/>
    </location>
</feature>
<feature type="compositionally biased region" description="Pro residues" evidence="5">
    <location>
        <begin position="282"/>
        <end position="300"/>
    </location>
</feature>
<feature type="compositionally biased region" description="Low complexity" evidence="5">
    <location>
        <begin position="304"/>
        <end position="338"/>
    </location>
</feature>
<feature type="compositionally biased region" description="Low complexity" evidence="5">
    <location>
        <begin position="675"/>
        <end position="686"/>
    </location>
</feature>
<feature type="compositionally biased region" description="Low complexity" evidence="5">
    <location>
        <begin position="745"/>
        <end position="772"/>
    </location>
</feature>
<feature type="modified residue" description="Phosphotyrosine; by MET" evidence="1">
    <location>
        <position position="814"/>
    </location>
</feature>
<feature type="splice variant" id="VSP_043659" description="In isoform 3." evidence="11">
    <original>MVQRMWAEAAGPAGGAEPLFPGSRRSRSVWDAVRLEVGVPDSCPVVLHSFTQLDPDLPRPE</original>
    <variation>MMVDCQ</variation>
    <location>
        <begin position="1"/>
        <end position="61"/>
    </location>
</feature>
<feature type="splice variant" id="VSP_055215" description="In isoform 4." evidence="9">
    <original>MVQRMWAEAAGPAGGAEPLFPGSRRSRSVWDAVRLEVGVPDSCPVVLHSFTQLDPDLPRPE</original>
    <variation>MCLWGHSTAPAHTLSSPPLLFCSLPCALHLQPGTGHPPGQVPRK</variation>
    <location>
        <begin position="1"/>
        <end position="61"/>
    </location>
</feature>
<feature type="splice variant" id="VSP_055216" description="In isoform 5." evidence="9">
    <original>MVQRMWAEAAGPAGGAEPLFPGSRRSRSVWDAVRLEVGVPDSCPVVLHSFTQLDPDLPRP</original>
    <variation>MAREAGQVCARPAVPRGRKGSVFFACVSVVTARRRAVARRAALQSPTPWLAPLPAPATT</variation>
    <location>
        <begin position="1"/>
        <end position="60"/>
    </location>
</feature>
<feature type="splice variant" id="VSP_055217" description="In isoform 4 and isoform 6." evidence="9 10">
    <location>
        <begin position="163"/>
        <end position="174"/>
    </location>
</feature>
<feature type="splice variant" id="VSP_035301" description="In isoform 2." evidence="8">
    <original>FWESASQSSPETSGISSASSSTSSSSASTTPVAATRTHKRSVSGLCNSSSALPLYNQQVGDCCIIRVSLDVDNGNMYKSILVTSQDKAPAVIRKAMDKHNLEEEEPEDYELLQILSDDRKLKIPENANVFYAMNSTANYDFVLKKRTFTKGVKVKHGASSTLPRMKQKGLKIAKG</original>
    <variation>VTACPSPQYPFPSPHSKSMHGARKPWILNTASRRFPIWQLAWGAPTGQWDLLILPSPSVLGISLTVIPGDLRHQLSLQQHLVLLSLHHARGCHTHPQALCLRALQLQLRAAALQPAGGRLLYHPRQPGRGQWQHVQEHPGKPAGVAWVPPSTGGKCTLNTVHHPCPPGVYLVVGGEGQMSARYRNEEGSDQGQGWPEGRGGGKEQPCKAPRS</variation>
    <location>
        <begin position="738"/>
        <end position="912"/>
    </location>
</feature>
<feature type="sequence variant" id="VAR_035822" description="In a colorectal cancer sample; somatic mutation." evidence="6">
    <original>R</original>
    <variation>L</variation>
    <location>
        <position position="496"/>
    </location>
</feature>
<feature type="sequence conflict" description="In Ref. 3; BAC87018." evidence="12" ref="3">
    <original>L</original>
    <variation>F</variation>
    <location>
        <position position="97"/>
    </location>
</feature>
<feature type="sequence conflict" description="In Ref. 3; BAH13489." evidence="12" ref="3">
    <original>A</original>
    <variation>T</variation>
    <location>
        <position position="869"/>
    </location>
</feature>
<feature type="strand" evidence="14">
    <location>
        <begin position="791"/>
        <end position="793"/>
    </location>
</feature>
<feature type="strand" evidence="15">
    <location>
        <begin position="795"/>
        <end position="797"/>
    </location>
</feature>
<feature type="strand" evidence="15">
    <location>
        <begin position="799"/>
        <end position="807"/>
    </location>
</feature>
<feature type="strand" evidence="15">
    <location>
        <begin position="809"/>
        <end position="820"/>
    </location>
</feature>
<feature type="helix" evidence="15">
    <location>
        <begin position="825"/>
        <end position="835"/>
    </location>
</feature>
<feature type="turn" evidence="14">
    <location>
        <begin position="836"/>
        <end position="839"/>
    </location>
</feature>
<feature type="helix" evidence="15">
    <location>
        <begin position="843"/>
        <end position="845"/>
    </location>
</feature>
<feature type="strand" evidence="15">
    <location>
        <begin position="846"/>
        <end position="853"/>
    </location>
</feature>
<feature type="strand" evidence="15">
    <location>
        <begin position="856"/>
        <end position="859"/>
    </location>
</feature>
<feature type="strand" evidence="13">
    <location>
        <begin position="862"/>
        <end position="864"/>
    </location>
</feature>
<feature type="helix" evidence="15">
    <location>
        <begin position="866"/>
        <end position="869"/>
    </location>
</feature>
<feature type="strand" evidence="15">
    <location>
        <begin position="877"/>
        <end position="882"/>
    </location>
</feature>
<feature type="sequence conflict" description="In Ref. 3; BAC87018." evidence="12" ref="3">
    <original>R</original>
    <variation>W</variation>
    <location sequence="Q12967-5">
        <position position="3"/>
    </location>
</feature>
<accession>Q12967</accession>
<accession>B7Z753</accession>
<accession>E7ER93</accession>
<accession>E7ERZ0</accession>
<accession>Q5T7V4</accession>
<accession>Q6KH11</accession>
<accession>Q6PCE1</accession>
<accession>Q6ZSD5</accession>
<accession>Q9HAX7</accession>
<accession>Q9HAY1</accession>
<accession>Q9HCT1</accession>
<accession>Q9P2N8</accession>
<keyword id="KW-0002">3D-structure</keyword>
<keyword id="KW-0025">Alternative splicing</keyword>
<keyword id="KW-0963">Cytoplasm</keyword>
<keyword id="KW-0344">Guanine-nucleotide releasing factor</keyword>
<keyword id="KW-0539">Nucleus</keyword>
<keyword id="KW-0597">Phosphoprotein</keyword>
<keyword id="KW-1267">Proteomics identification</keyword>
<keyword id="KW-1185">Reference proteome</keyword>
<protein>
    <recommendedName>
        <fullName>Ral guanine nucleotide dissociation stimulator</fullName>
        <shortName>RalGDS</shortName>
    </recommendedName>
    <alternativeName>
        <fullName>Ral guanine nucleotide exchange factor</fullName>
        <shortName>RalGEF</shortName>
    </alternativeName>
</protein>
<evidence type="ECO:0000250" key="1">
    <source>
        <dbReference type="UniProtKB" id="Q03385"/>
    </source>
</evidence>
<evidence type="ECO:0000255" key="2">
    <source>
        <dbReference type="PROSITE-ProRule" id="PRU00135"/>
    </source>
</evidence>
<evidence type="ECO:0000255" key="3">
    <source>
        <dbReference type="PROSITE-ProRule" id="PRU00166"/>
    </source>
</evidence>
<evidence type="ECO:0000255" key="4">
    <source>
        <dbReference type="PROSITE-ProRule" id="PRU00168"/>
    </source>
</evidence>
<evidence type="ECO:0000256" key="5">
    <source>
        <dbReference type="SAM" id="MobiDB-lite"/>
    </source>
</evidence>
<evidence type="ECO:0000269" key="6">
    <source>
    </source>
</evidence>
<evidence type="ECO:0000269" key="7">
    <source>
    </source>
</evidence>
<evidence type="ECO:0000303" key="8">
    <source>
    </source>
</evidence>
<evidence type="ECO:0000303" key="9">
    <source>
    </source>
</evidence>
<evidence type="ECO:0000303" key="10">
    <source>
    </source>
</evidence>
<evidence type="ECO:0000303" key="11">
    <source ref="2"/>
</evidence>
<evidence type="ECO:0000305" key="12"/>
<evidence type="ECO:0007829" key="13">
    <source>
        <dbReference type="PDB" id="2B3A"/>
    </source>
</evidence>
<evidence type="ECO:0007829" key="14">
    <source>
        <dbReference type="PDB" id="2RGF"/>
    </source>
</evidence>
<evidence type="ECO:0007829" key="15">
    <source>
        <dbReference type="PDB" id="3KH0"/>
    </source>
</evidence>
<gene>
    <name type="primary">RALGDS</name>
    <name type="synonym">KIAA1308</name>
    <name type="synonym">RGF</name>
</gene>
<dbReference type="EMBL" id="AF295773">
    <property type="protein sequence ID" value="AAG02122.1"/>
    <property type="molecule type" value="mRNA"/>
</dbReference>
<dbReference type="EMBL" id="AK127524">
    <property type="protein sequence ID" value="BAC87018.1"/>
    <property type="molecule type" value="mRNA"/>
</dbReference>
<dbReference type="EMBL" id="AK301470">
    <property type="protein sequence ID" value="BAH13489.1"/>
    <property type="molecule type" value="mRNA"/>
</dbReference>
<dbReference type="EMBL" id="AF295775">
    <property type="protein sequence ID" value="AAG10221.1"/>
    <property type="molecule type" value="Genomic_DNA"/>
</dbReference>
<dbReference type="EMBL" id="AF295778">
    <property type="protein sequence ID" value="AAG10221.1"/>
    <property type="status" value="JOINED"/>
    <property type="molecule type" value="Genomic_DNA"/>
</dbReference>
<dbReference type="EMBL" id="AF295780">
    <property type="protein sequence ID" value="AAG10225.1"/>
    <property type="molecule type" value="Genomic_DNA"/>
</dbReference>
<dbReference type="EMBL" id="AF027169">
    <property type="protein sequence ID" value="AAQ13414.1"/>
    <property type="molecule type" value="mRNA"/>
</dbReference>
<dbReference type="EMBL" id="AL162417">
    <property type="status" value="NOT_ANNOTATED_CDS"/>
    <property type="molecule type" value="Genomic_DNA"/>
</dbReference>
<dbReference type="EMBL" id="CH471090">
    <property type="protein sequence ID" value="EAW88040.1"/>
    <property type="molecule type" value="Genomic_DNA"/>
</dbReference>
<dbReference type="EMBL" id="CH471090">
    <property type="protein sequence ID" value="EAW88042.1"/>
    <property type="molecule type" value="Genomic_DNA"/>
</dbReference>
<dbReference type="EMBL" id="BC059362">
    <property type="protein sequence ID" value="AAH59362.1"/>
    <property type="molecule type" value="mRNA"/>
</dbReference>
<dbReference type="EMBL" id="AB037729">
    <property type="protein sequence ID" value="BAA92546.1"/>
    <property type="molecule type" value="mRNA"/>
</dbReference>
<dbReference type="EMBL" id="U14417">
    <property type="protein sequence ID" value="AAA52360.1"/>
    <property type="molecule type" value="mRNA"/>
</dbReference>
<dbReference type="CCDS" id="CCDS43897.1">
    <molecule id="Q12967-3"/>
</dbReference>
<dbReference type="CCDS" id="CCDS65172.1">
    <molecule id="Q12967-6"/>
</dbReference>
<dbReference type="CCDS" id="CCDS65173.1">
    <molecule id="Q12967-5"/>
</dbReference>
<dbReference type="CCDS" id="CCDS65174.1">
    <molecule id="Q12967-4"/>
</dbReference>
<dbReference type="CCDS" id="CCDS6959.1">
    <molecule id="Q12967-1"/>
</dbReference>
<dbReference type="PIR" id="I38853">
    <property type="entry name" value="I38853"/>
</dbReference>
<dbReference type="RefSeq" id="NP_001035827.1">
    <molecule id="Q12967-3"/>
    <property type="nucleotide sequence ID" value="NM_001042368.3"/>
</dbReference>
<dbReference type="RefSeq" id="NP_001258703.1">
    <molecule id="Q12967-4"/>
    <property type="nucleotide sequence ID" value="NM_001271774.2"/>
</dbReference>
<dbReference type="RefSeq" id="NP_001258704.1">
    <molecule id="Q12967-5"/>
    <property type="nucleotide sequence ID" value="NM_001271775.2"/>
</dbReference>
<dbReference type="RefSeq" id="NP_001258705.1">
    <molecule id="Q12967-6"/>
    <property type="nucleotide sequence ID" value="NM_001271776.2"/>
</dbReference>
<dbReference type="RefSeq" id="NP_006257.1">
    <molecule id="Q12967-1"/>
    <property type="nucleotide sequence ID" value="NM_006266.4"/>
</dbReference>
<dbReference type="PDB" id="1RAX">
    <property type="method" value="NMR"/>
    <property type="chains" value="A=775-886"/>
</dbReference>
<dbReference type="PDB" id="2B3A">
    <property type="method" value="NMR"/>
    <property type="chains" value="A=798-884"/>
</dbReference>
<dbReference type="PDB" id="2RGF">
    <property type="method" value="NMR"/>
    <property type="chains" value="A=788-884"/>
</dbReference>
<dbReference type="PDB" id="3KH0">
    <property type="method" value="X-ray"/>
    <property type="resolution" value="2.10 A"/>
    <property type="chains" value="A/B=793-914"/>
</dbReference>
<dbReference type="PDBsum" id="1RAX"/>
<dbReference type="PDBsum" id="2B3A"/>
<dbReference type="PDBsum" id="2RGF"/>
<dbReference type="PDBsum" id="3KH0"/>
<dbReference type="SMR" id="Q12967"/>
<dbReference type="BioGRID" id="111836">
    <property type="interactions" value="31"/>
</dbReference>
<dbReference type="DIP" id="DIP-31375N"/>
<dbReference type="FunCoup" id="Q12967">
    <property type="interactions" value="2118"/>
</dbReference>
<dbReference type="IntAct" id="Q12967">
    <property type="interactions" value="20"/>
</dbReference>
<dbReference type="MINT" id="Q12967"/>
<dbReference type="STRING" id="9606.ENSP00000361120"/>
<dbReference type="GlyGen" id="Q12967">
    <property type="glycosylation" value="2 sites, 1 O-linked glycan (1 site)"/>
</dbReference>
<dbReference type="iPTMnet" id="Q12967"/>
<dbReference type="PhosphoSitePlus" id="Q12967"/>
<dbReference type="BioMuta" id="RALGDS"/>
<dbReference type="DMDM" id="14549162"/>
<dbReference type="jPOST" id="Q12967"/>
<dbReference type="MassIVE" id="Q12967"/>
<dbReference type="PaxDb" id="9606-ENSP00000361120"/>
<dbReference type="PeptideAtlas" id="Q12967"/>
<dbReference type="ProteomicsDB" id="17741"/>
<dbReference type="ProteomicsDB" id="17880"/>
<dbReference type="ProteomicsDB" id="59058">
    <molecule id="Q12967-1"/>
</dbReference>
<dbReference type="ProteomicsDB" id="59059">
    <molecule id="Q12967-2"/>
</dbReference>
<dbReference type="ProteomicsDB" id="59060">
    <molecule id="Q12967-3"/>
</dbReference>
<dbReference type="ProteomicsDB" id="67063"/>
<dbReference type="Antibodypedia" id="31763">
    <property type="antibodies" value="126 antibodies from 27 providers"/>
</dbReference>
<dbReference type="DNASU" id="5900"/>
<dbReference type="Ensembl" id="ENST00000372047.7">
    <molecule id="Q12967-6"/>
    <property type="protein sequence ID" value="ENSP00000361117.3"/>
    <property type="gene ID" value="ENSG00000160271.16"/>
</dbReference>
<dbReference type="Ensembl" id="ENST00000372050.8">
    <molecule id="Q12967-1"/>
    <property type="protein sequence ID" value="ENSP00000361120.3"/>
    <property type="gene ID" value="ENSG00000160271.16"/>
</dbReference>
<dbReference type="Ensembl" id="ENST00000372062.8">
    <molecule id="Q12967-4"/>
    <property type="protein sequence ID" value="ENSP00000361132.3"/>
    <property type="gene ID" value="ENSG00000160271.16"/>
</dbReference>
<dbReference type="Ensembl" id="ENST00000393157.8">
    <molecule id="Q12967-5"/>
    <property type="protein sequence ID" value="ENSP00000376864.3"/>
    <property type="gene ID" value="ENSG00000160271.16"/>
</dbReference>
<dbReference type="Ensembl" id="ENST00000393160.7">
    <molecule id="Q12967-3"/>
    <property type="protein sequence ID" value="ENSP00000376867.3"/>
    <property type="gene ID" value="ENSG00000160271.16"/>
</dbReference>
<dbReference type="GeneID" id="5900"/>
<dbReference type="KEGG" id="hsa:5900"/>
<dbReference type="MANE-Select" id="ENST00000372050.8">
    <property type="protein sequence ID" value="ENSP00000361120.3"/>
    <property type="RefSeq nucleotide sequence ID" value="NM_006266.4"/>
    <property type="RefSeq protein sequence ID" value="NP_006257.1"/>
</dbReference>
<dbReference type="UCSC" id="uc004cco.5">
    <molecule id="Q12967-1"/>
    <property type="organism name" value="human"/>
</dbReference>
<dbReference type="AGR" id="HGNC:9842"/>
<dbReference type="CTD" id="5900"/>
<dbReference type="DisGeNET" id="5900"/>
<dbReference type="GeneCards" id="RALGDS"/>
<dbReference type="HGNC" id="HGNC:9842">
    <property type="gene designation" value="RALGDS"/>
</dbReference>
<dbReference type="HPA" id="ENSG00000160271">
    <property type="expression patterns" value="Low tissue specificity"/>
</dbReference>
<dbReference type="MalaCards" id="RALGDS"/>
<dbReference type="MIM" id="601619">
    <property type="type" value="gene"/>
</dbReference>
<dbReference type="neXtProt" id="NX_Q12967"/>
<dbReference type="OpenTargets" id="ENSG00000160271"/>
<dbReference type="PharmGKB" id="PA34200"/>
<dbReference type="VEuPathDB" id="HostDB:ENSG00000160271"/>
<dbReference type="eggNOG" id="KOG3629">
    <property type="taxonomic scope" value="Eukaryota"/>
</dbReference>
<dbReference type="GeneTree" id="ENSGT00940000153181"/>
<dbReference type="HOGENOM" id="CLU_010252_0_1_1"/>
<dbReference type="InParanoid" id="Q12967"/>
<dbReference type="OMA" id="PDKCNPY"/>
<dbReference type="OrthoDB" id="26687at2759"/>
<dbReference type="PAN-GO" id="Q12967">
    <property type="GO annotations" value="4 GO annotations based on evolutionary models"/>
</dbReference>
<dbReference type="PhylomeDB" id="Q12967"/>
<dbReference type="TreeFam" id="TF315204"/>
<dbReference type="PathwayCommons" id="Q12967"/>
<dbReference type="Reactome" id="R-HSA-171007">
    <property type="pathway name" value="p38MAPK events"/>
</dbReference>
<dbReference type="Reactome" id="R-HSA-5673001">
    <property type="pathway name" value="RAF/MAP kinase cascade"/>
</dbReference>
<dbReference type="SignaLink" id="Q12967"/>
<dbReference type="SIGNOR" id="Q12967"/>
<dbReference type="BioGRID-ORCS" id="5900">
    <property type="hits" value="18 hits in 1153 CRISPR screens"/>
</dbReference>
<dbReference type="ChiTaRS" id="RALGDS">
    <property type="organism name" value="human"/>
</dbReference>
<dbReference type="EvolutionaryTrace" id="Q12967"/>
<dbReference type="GeneWiki" id="RALGDS"/>
<dbReference type="GenomeRNAi" id="5900"/>
<dbReference type="Pharos" id="Q12967">
    <property type="development level" value="Tbio"/>
</dbReference>
<dbReference type="PRO" id="PR:Q12967"/>
<dbReference type="Proteomes" id="UP000005640">
    <property type="component" value="Chromosome 9"/>
</dbReference>
<dbReference type="RNAct" id="Q12967">
    <property type="molecule type" value="protein"/>
</dbReference>
<dbReference type="Bgee" id="ENSG00000160271">
    <property type="expression patterns" value="Expressed in right hemisphere of cerebellum and 96 other cell types or tissues"/>
</dbReference>
<dbReference type="ExpressionAtlas" id="Q12967">
    <property type="expression patterns" value="baseline and differential"/>
</dbReference>
<dbReference type="GO" id="GO:0005903">
    <property type="term" value="C:brush border"/>
    <property type="evidence" value="ECO:0000314"/>
    <property type="project" value="UniProtKB"/>
</dbReference>
<dbReference type="GO" id="GO:0005829">
    <property type="term" value="C:cytosol"/>
    <property type="evidence" value="ECO:0000314"/>
    <property type="project" value="UniProtKB"/>
</dbReference>
<dbReference type="GO" id="GO:0005634">
    <property type="term" value="C:nucleus"/>
    <property type="evidence" value="ECO:0000314"/>
    <property type="project" value="UniProtKB"/>
</dbReference>
<dbReference type="GO" id="GO:0005886">
    <property type="term" value="C:plasma membrane"/>
    <property type="evidence" value="ECO:0000318"/>
    <property type="project" value="GO_Central"/>
</dbReference>
<dbReference type="GO" id="GO:0030695">
    <property type="term" value="F:GTPase regulator activity"/>
    <property type="evidence" value="ECO:0000314"/>
    <property type="project" value="UniProtKB"/>
</dbReference>
<dbReference type="GO" id="GO:0005085">
    <property type="term" value="F:guanyl-nucleotide exchange factor activity"/>
    <property type="evidence" value="ECO:0000318"/>
    <property type="project" value="GO_Central"/>
</dbReference>
<dbReference type="GO" id="GO:0007265">
    <property type="term" value="P:Ras protein signal transduction"/>
    <property type="evidence" value="ECO:0000318"/>
    <property type="project" value="GO_Central"/>
</dbReference>
<dbReference type="CDD" id="cd17209">
    <property type="entry name" value="RA_RalGDS"/>
    <property type="match status" value="1"/>
</dbReference>
<dbReference type="CDD" id="cd00155">
    <property type="entry name" value="RasGEF"/>
    <property type="match status" value="1"/>
</dbReference>
<dbReference type="CDD" id="cd06224">
    <property type="entry name" value="REM"/>
    <property type="match status" value="1"/>
</dbReference>
<dbReference type="FunFam" id="1.10.840.10:FF:000005">
    <property type="entry name" value="Ral guanine nucleotide dissociation stimulator isoform 1"/>
    <property type="match status" value="1"/>
</dbReference>
<dbReference type="FunFam" id="1.20.870.10:FF:000003">
    <property type="entry name" value="Ral guanine nucleotide dissociation stimulator isoform 1"/>
    <property type="match status" value="1"/>
</dbReference>
<dbReference type="FunFam" id="3.10.20.90:FF:000042">
    <property type="entry name" value="Ral guanine nucleotide dissociation stimulator isoform 1"/>
    <property type="match status" value="1"/>
</dbReference>
<dbReference type="Gene3D" id="3.10.20.90">
    <property type="entry name" value="Phosphatidylinositol 3-kinase Catalytic Subunit, Chain A, domain 1"/>
    <property type="match status" value="1"/>
</dbReference>
<dbReference type="Gene3D" id="1.10.840.10">
    <property type="entry name" value="Ras guanine-nucleotide exchange factors catalytic domain"/>
    <property type="match status" value="1"/>
</dbReference>
<dbReference type="Gene3D" id="1.20.870.10">
    <property type="entry name" value="Son of sevenless (SoS) protein Chain: S domain 1"/>
    <property type="match status" value="1"/>
</dbReference>
<dbReference type="InterPro" id="IPR000159">
    <property type="entry name" value="RA_dom"/>
</dbReference>
<dbReference type="InterPro" id="IPR015758">
    <property type="entry name" value="RalGDS_RA"/>
</dbReference>
<dbReference type="InterPro" id="IPR008937">
    <property type="entry name" value="Ras-like_GEF"/>
</dbReference>
<dbReference type="InterPro" id="IPR000651">
    <property type="entry name" value="Ras-like_Gua-exchang_fac_N"/>
</dbReference>
<dbReference type="InterPro" id="IPR019804">
    <property type="entry name" value="Ras_G-nucl-exch_fac_CS"/>
</dbReference>
<dbReference type="InterPro" id="IPR023578">
    <property type="entry name" value="Ras_GEF_dom_sf"/>
</dbReference>
<dbReference type="InterPro" id="IPR001895">
    <property type="entry name" value="RASGEF_cat_dom"/>
</dbReference>
<dbReference type="InterPro" id="IPR036964">
    <property type="entry name" value="RASGEF_cat_dom_sf"/>
</dbReference>
<dbReference type="InterPro" id="IPR029071">
    <property type="entry name" value="Ubiquitin-like_domsf"/>
</dbReference>
<dbReference type="PANTHER" id="PTHR23113">
    <property type="entry name" value="GUANINE NUCLEOTIDE EXCHANGE FACTOR"/>
    <property type="match status" value="1"/>
</dbReference>
<dbReference type="PANTHER" id="PTHR23113:SF35">
    <property type="entry name" value="RAL GUANINE NUCLEOTIDE DISSOCIATION STIMULATOR"/>
    <property type="match status" value="1"/>
</dbReference>
<dbReference type="Pfam" id="PF00788">
    <property type="entry name" value="RA"/>
    <property type="match status" value="1"/>
</dbReference>
<dbReference type="Pfam" id="PF00617">
    <property type="entry name" value="RasGEF"/>
    <property type="match status" value="1"/>
</dbReference>
<dbReference type="Pfam" id="PF00618">
    <property type="entry name" value="RasGEF_N"/>
    <property type="match status" value="1"/>
</dbReference>
<dbReference type="SMART" id="SM00314">
    <property type="entry name" value="RA"/>
    <property type="match status" value="1"/>
</dbReference>
<dbReference type="SMART" id="SM00147">
    <property type="entry name" value="RasGEF"/>
    <property type="match status" value="1"/>
</dbReference>
<dbReference type="SMART" id="SM00229">
    <property type="entry name" value="RasGEFN"/>
    <property type="match status" value="1"/>
</dbReference>
<dbReference type="SUPFAM" id="SSF48366">
    <property type="entry name" value="Ras GEF"/>
    <property type="match status" value="1"/>
</dbReference>
<dbReference type="SUPFAM" id="SSF54236">
    <property type="entry name" value="Ubiquitin-like"/>
    <property type="match status" value="1"/>
</dbReference>
<dbReference type="PROSITE" id="PS50200">
    <property type="entry name" value="RA"/>
    <property type="match status" value="1"/>
</dbReference>
<dbReference type="PROSITE" id="PS00720">
    <property type="entry name" value="RASGEF"/>
    <property type="match status" value="1"/>
</dbReference>
<dbReference type="PROSITE" id="PS50009">
    <property type="entry name" value="RASGEF_CAT"/>
    <property type="match status" value="1"/>
</dbReference>
<dbReference type="PROSITE" id="PS50212">
    <property type="entry name" value="RASGEF_NTER"/>
    <property type="match status" value="1"/>
</dbReference>